<organism>
    <name type="scientific">Vibrio alginolyticus</name>
    <dbReference type="NCBI Taxonomy" id="663"/>
    <lineage>
        <taxon>Bacteria</taxon>
        <taxon>Pseudomonadati</taxon>
        <taxon>Pseudomonadota</taxon>
        <taxon>Gammaproteobacteria</taxon>
        <taxon>Vibrionales</taxon>
        <taxon>Vibrionaceae</taxon>
        <taxon>Vibrio</taxon>
    </lineage>
</organism>
<proteinExistence type="inferred from homology"/>
<feature type="chain" id="PRO_0000080140" description="Fructokinase">
    <location>
        <begin position="1"/>
        <end position="307"/>
    </location>
</feature>
<keyword id="KW-0067">ATP-binding</keyword>
<keyword id="KW-0119">Carbohydrate metabolism</keyword>
<keyword id="KW-0418">Kinase</keyword>
<keyword id="KW-0547">Nucleotide-binding</keyword>
<keyword id="KW-0808">Transferase</keyword>
<accession>P22824</accession>
<sequence length="307" mass="33046">MNQVWVTGDAVVDLIPESETSLLKCPGGAPANVAVAIARLSGKSAFFGRVGDDPFGRFMQSILDQEGVCTEFLIKDPEQRTSTVVVDLDDQGERSFTFMVKPSADQFMSVEDMGNFKQGDWLHVCSISLANEPSRSSTFEAIKRAKAAGGFISFDPNLRDEVWQDQSEIQAVVMKAVAMADVVKFSEEELLFLTDSTSMAQGLQQIAAMNIALVLVTQGAKGVWRVFESQSELITGQVVSPIDTTGAGDAFVGGLLACLSRHADWKNHPVVSSAIQWANGCGALATTQKGAMTALPTQTELLRFIGQ</sequence>
<name>SCRK_VIBAL</name>
<evidence type="ECO:0000305" key="1"/>
<reference key="1">
    <citation type="journal article" date="1990" name="Gene">
        <title>Nucleotide sequence and analysis of the Vibrio alginolyticus sucrose uptake-encoding region.</title>
        <authorList>
            <person name="Blatch G.L."/>
            <person name="Scholle R.R."/>
            <person name="Woods D.R."/>
        </authorList>
    </citation>
    <scope>NUCLEOTIDE SEQUENCE [GENOMIC DNA]</scope>
</reference>
<dbReference type="EC" id="2.7.1.4"/>
<dbReference type="EMBL" id="M76768">
    <property type="protein sequence ID" value="AAA27556.1"/>
    <property type="molecule type" value="Genomic_DNA"/>
</dbReference>
<dbReference type="PIR" id="JQ0782">
    <property type="entry name" value="JQ0782"/>
</dbReference>
<dbReference type="SMR" id="P22824"/>
<dbReference type="STRING" id="663.BAU10_17440"/>
<dbReference type="eggNOG" id="COG0524">
    <property type="taxonomic scope" value="Bacteria"/>
</dbReference>
<dbReference type="GO" id="GO:0005524">
    <property type="term" value="F:ATP binding"/>
    <property type="evidence" value="ECO:0007669"/>
    <property type="project" value="UniProtKB-KW"/>
</dbReference>
<dbReference type="GO" id="GO:0008865">
    <property type="term" value="F:fructokinase activity"/>
    <property type="evidence" value="ECO:0007669"/>
    <property type="project" value="UniProtKB-EC"/>
</dbReference>
<dbReference type="GO" id="GO:0006000">
    <property type="term" value="P:fructose metabolic process"/>
    <property type="evidence" value="ECO:0007669"/>
    <property type="project" value="UniProtKB-ARBA"/>
</dbReference>
<dbReference type="CDD" id="cd01167">
    <property type="entry name" value="bac_FRK"/>
    <property type="match status" value="1"/>
</dbReference>
<dbReference type="Gene3D" id="3.40.1190.20">
    <property type="match status" value="1"/>
</dbReference>
<dbReference type="InterPro" id="IPR002173">
    <property type="entry name" value="Carboh/pur_kinase_PfkB_CS"/>
</dbReference>
<dbReference type="InterPro" id="IPR050306">
    <property type="entry name" value="PfkB_Carbo_kinase"/>
</dbReference>
<dbReference type="InterPro" id="IPR011611">
    <property type="entry name" value="PfkB_dom"/>
</dbReference>
<dbReference type="InterPro" id="IPR002139">
    <property type="entry name" value="Ribo/fructo_kinase"/>
</dbReference>
<dbReference type="InterPro" id="IPR029056">
    <property type="entry name" value="Ribokinase-like"/>
</dbReference>
<dbReference type="NCBIfam" id="NF006957">
    <property type="entry name" value="PRK09434.1"/>
    <property type="match status" value="1"/>
</dbReference>
<dbReference type="PANTHER" id="PTHR43085">
    <property type="entry name" value="HEXOKINASE FAMILY MEMBER"/>
    <property type="match status" value="1"/>
</dbReference>
<dbReference type="PANTHER" id="PTHR43085:SF1">
    <property type="entry name" value="PSEUDOURIDINE KINASE-RELATED"/>
    <property type="match status" value="1"/>
</dbReference>
<dbReference type="Pfam" id="PF00294">
    <property type="entry name" value="PfkB"/>
    <property type="match status" value="1"/>
</dbReference>
<dbReference type="PRINTS" id="PR00990">
    <property type="entry name" value="RIBOKINASE"/>
</dbReference>
<dbReference type="SUPFAM" id="SSF53613">
    <property type="entry name" value="Ribokinase-like"/>
    <property type="match status" value="1"/>
</dbReference>
<dbReference type="PROSITE" id="PS00583">
    <property type="entry name" value="PFKB_KINASES_1"/>
    <property type="match status" value="1"/>
</dbReference>
<dbReference type="PROSITE" id="PS00584">
    <property type="entry name" value="PFKB_KINASES_2"/>
    <property type="match status" value="1"/>
</dbReference>
<comment type="catalytic activity">
    <reaction>
        <text>D-fructose + ATP = D-fructose 6-phosphate + ADP + H(+)</text>
        <dbReference type="Rhea" id="RHEA:16125"/>
        <dbReference type="ChEBI" id="CHEBI:15378"/>
        <dbReference type="ChEBI" id="CHEBI:30616"/>
        <dbReference type="ChEBI" id="CHEBI:37721"/>
        <dbReference type="ChEBI" id="CHEBI:61527"/>
        <dbReference type="ChEBI" id="CHEBI:456216"/>
        <dbReference type="EC" id="2.7.1.4"/>
    </reaction>
</comment>
<comment type="similarity">
    <text evidence="1">Belongs to the carbohydrate kinase PfkB family.</text>
</comment>
<gene>
    <name type="primary">scrK</name>
</gene>
<protein>
    <recommendedName>
        <fullName>Fructokinase</fullName>
        <ecNumber>2.7.1.4</ecNumber>
    </recommendedName>
</protein>